<sequence>MLKMEINGGVATPTASAVAKVTETTTPVNSPSPTSSPPPPPSPQQPPQPPVVLSPCAACKILRRRCADKCVLAPYFPPTDPAKFTIAHRVFGASNIIKFLQELPESQRTDAVNSMVYEAGARMRDPVYGCAGAIYHLQRQVSELQAQLAKTQVELVGMQLQRSSLLELIYNMEQTKLSVQEQGQQKMSFESSFESGDEFISSPDEESNDLGFLEDNNNNNNSSMSWWDPLWT</sequence>
<accession>Q9SK08</accession>
<accession>B7XG61</accession>
<proteinExistence type="evidence at transcript level"/>
<dbReference type="EMBL" id="AC006587">
    <property type="protein sequence ID" value="AAD21485.1"/>
    <property type="status" value="ALT_INIT"/>
    <property type="molecule type" value="Genomic_DNA"/>
</dbReference>
<dbReference type="EMBL" id="CP002685">
    <property type="protein sequence ID" value="AEC08131.1"/>
    <property type="molecule type" value="Genomic_DNA"/>
</dbReference>
<dbReference type="EMBL" id="CK117671">
    <property type="status" value="NOT_ANNOTATED_CDS"/>
    <property type="molecule type" value="mRNA"/>
</dbReference>
<dbReference type="EMBL" id="AB473840">
    <property type="protein sequence ID" value="BAH10551.1"/>
    <property type="status" value="ALT_INIT"/>
    <property type="molecule type" value="mRNA"/>
</dbReference>
<dbReference type="PIR" id="F84685">
    <property type="entry name" value="F84685"/>
</dbReference>
<dbReference type="RefSeq" id="NP_180417.2">
    <property type="nucleotide sequence ID" value="NM_128410.3"/>
</dbReference>
<dbReference type="SMR" id="Q9SK08"/>
<dbReference type="FunCoup" id="Q9SK08">
    <property type="interactions" value="93"/>
</dbReference>
<dbReference type="STRING" id="3702.Q9SK08"/>
<dbReference type="GlyGen" id="Q9SK08">
    <property type="glycosylation" value="1 site"/>
</dbReference>
<dbReference type="iPTMnet" id="Q9SK08"/>
<dbReference type="PaxDb" id="3702-AT2G28500.1"/>
<dbReference type="EnsemblPlants" id="AT2G28500.1">
    <property type="protein sequence ID" value="AT2G28500.1"/>
    <property type="gene ID" value="AT2G28500"/>
</dbReference>
<dbReference type="GeneID" id="817398"/>
<dbReference type="Gramene" id="AT2G28500.1">
    <property type="protein sequence ID" value="AT2G28500.1"/>
    <property type="gene ID" value="AT2G28500"/>
</dbReference>
<dbReference type="KEGG" id="ath:AT2G28500"/>
<dbReference type="Araport" id="AT2G28500"/>
<dbReference type="TAIR" id="AT2G28500">
    <property type="gene designation" value="LBD11"/>
</dbReference>
<dbReference type="eggNOG" id="ENOG502QV36">
    <property type="taxonomic scope" value="Eukaryota"/>
</dbReference>
<dbReference type="HOGENOM" id="CLU_058353_4_0_1"/>
<dbReference type="InParanoid" id="Q9SK08"/>
<dbReference type="OMA" id="YNMEQTK"/>
<dbReference type="PRO" id="PR:Q9SK08"/>
<dbReference type="Proteomes" id="UP000006548">
    <property type="component" value="Chromosome 2"/>
</dbReference>
<dbReference type="ExpressionAtlas" id="Q9SK08">
    <property type="expression patterns" value="baseline and differential"/>
</dbReference>
<dbReference type="InterPro" id="IPR004883">
    <property type="entry name" value="LOB"/>
</dbReference>
<dbReference type="PANTHER" id="PTHR31301:SF122">
    <property type="entry name" value="LOB DOMAIN-CONTAINING PROTEIN 11"/>
    <property type="match status" value="1"/>
</dbReference>
<dbReference type="PANTHER" id="PTHR31301">
    <property type="entry name" value="LOB DOMAIN-CONTAINING PROTEIN 4-RELATED"/>
    <property type="match status" value="1"/>
</dbReference>
<dbReference type="Pfam" id="PF03195">
    <property type="entry name" value="LOB"/>
    <property type="match status" value="1"/>
</dbReference>
<dbReference type="PROSITE" id="PS50891">
    <property type="entry name" value="LOB"/>
    <property type="match status" value="1"/>
</dbReference>
<feature type="chain" id="PRO_0000132262" description="LOB domain-containing protein 11">
    <location>
        <begin position="1"/>
        <end position="232"/>
    </location>
</feature>
<feature type="domain" description="LOB" evidence="1">
    <location>
        <begin position="54"/>
        <end position="155"/>
    </location>
</feature>
<feature type="region of interest" description="Disordered" evidence="2">
    <location>
        <begin position="1"/>
        <end position="50"/>
    </location>
</feature>
<feature type="region of interest" description="Disordered" evidence="2">
    <location>
        <begin position="181"/>
        <end position="218"/>
    </location>
</feature>
<feature type="compositionally biased region" description="Pro residues" evidence="2">
    <location>
        <begin position="34"/>
        <end position="50"/>
    </location>
</feature>
<feature type="compositionally biased region" description="Low complexity" evidence="2">
    <location>
        <begin position="188"/>
        <end position="202"/>
    </location>
</feature>
<name>LBD11_ARATH</name>
<reference key="1">
    <citation type="journal article" date="1999" name="Nature">
        <title>Sequence and analysis of chromosome 2 of the plant Arabidopsis thaliana.</title>
        <authorList>
            <person name="Lin X."/>
            <person name="Kaul S."/>
            <person name="Rounsley S.D."/>
            <person name="Shea T.P."/>
            <person name="Benito M.-I."/>
            <person name="Town C.D."/>
            <person name="Fujii C.Y."/>
            <person name="Mason T.M."/>
            <person name="Bowman C.L."/>
            <person name="Barnstead M.E."/>
            <person name="Feldblyum T.V."/>
            <person name="Buell C.R."/>
            <person name="Ketchum K.A."/>
            <person name="Lee J.J."/>
            <person name="Ronning C.M."/>
            <person name="Koo H.L."/>
            <person name="Moffat K.S."/>
            <person name="Cronin L.A."/>
            <person name="Shen M."/>
            <person name="Pai G."/>
            <person name="Van Aken S."/>
            <person name="Umayam L."/>
            <person name="Tallon L.J."/>
            <person name="Gill J.E."/>
            <person name="Adams M.D."/>
            <person name="Carrera A.J."/>
            <person name="Creasy T.H."/>
            <person name="Goodman H.M."/>
            <person name="Somerville C.R."/>
            <person name="Copenhaver G.P."/>
            <person name="Preuss D."/>
            <person name="Nierman W.C."/>
            <person name="White O."/>
            <person name="Eisen J.A."/>
            <person name="Salzberg S.L."/>
            <person name="Fraser C.M."/>
            <person name="Venter J.C."/>
        </authorList>
    </citation>
    <scope>NUCLEOTIDE SEQUENCE [LARGE SCALE GENOMIC DNA]</scope>
    <source>
        <strain>cv. Columbia</strain>
    </source>
</reference>
<reference key="2">
    <citation type="journal article" date="2017" name="Plant J.">
        <title>Araport11: a complete reannotation of the Arabidopsis thaliana reference genome.</title>
        <authorList>
            <person name="Cheng C.Y."/>
            <person name="Krishnakumar V."/>
            <person name="Chan A.P."/>
            <person name="Thibaud-Nissen F."/>
            <person name="Schobel S."/>
            <person name="Town C.D."/>
        </authorList>
    </citation>
    <scope>GENOME REANNOTATION</scope>
    <source>
        <strain>cv. Columbia</strain>
    </source>
</reference>
<reference key="3">
    <citation type="journal article" date="2005" name="Mol. Cell. Proteomics">
        <title>High throughput identification of potential Arabidopsis mitogen-activated protein kinases substrates.</title>
        <authorList>
            <person name="Feilner T."/>
            <person name="Hultschig C."/>
            <person name="Lee J."/>
            <person name="Meyer S."/>
            <person name="Immink R.G.H."/>
            <person name="Koenig A."/>
            <person name="Possling A."/>
            <person name="Seitz H."/>
            <person name="Beveridge A."/>
            <person name="Scheel D."/>
            <person name="Cahill D.J."/>
            <person name="Lehrach H."/>
            <person name="Kreutzberger J."/>
            <person name="Kersten B."/>
        </authorList>
    </citation>
    <scope>NUCLEOTIDE SEQUENCE [LARGE SCALE MRNA]</scope>
</reference>
<reference key="4">
    <citation type="journal article" date="2009" name="Plant J.">
        <title>Characterization of genes in the ASYMMETRIC LEAVES2/LATERAL ORGAN BOUNDARIES (AS2/LOB) family in Arabidopsis thaliana, and functional and molecular comparisons between AS2 and other family members.</title>
        <authorList>
            <person name="Matsumura Y."/>
            <person name="Iwakawa H."/>
            <person name="Machida Y."/>
            <person name="Machida C."/>
        </authorList>
    </citation>
    <scope>NUCLEOTIDE SEQUENCE [MRNA] OF 3-232</scope>
    <source>
        <strain>cv. Columbia</strain>
    </source>
</reference>
<reference key="5">
    <citation type="journal article" date="2002" name="Plant Physiol.">
        <title>The LATERAL ORGAN BOUNDARIES gene defines a novel, plant-specific gene family.</title>
        <authorList>
            <person name="Shuai B."/>
            <person name="Reynaga-Pena C.G."/>
            <person name="Springer P.S."/>
        </authorList>
    </citation>
    <scope>TISSUE SPECIFICITY</scope>
    <scope>GENE FAMILY</scope>
    <scope>NOMENCLATURE</scope>
</reference>
<reference key="6">
    <citation type="journal article" date="2002" name="Plant Cell Physiol.">
        <title>The ASYMMETRIC LEAVES2 gene of Arabidopsis thaliana, required for formation of a symmetric flat leaf lamina, encodes a member of a novel family of proteins characterized by cysteine repeats and a leucine zipper.</title>
        <authorList>
            <person name="Iwakawa H."/>
            <person name="Ueno Y."/>
            <person name="Semiarti E."/>
            <person name="Onouchi H."/>
            <person name="Kojima S."/>
            <person name="Tsukaya H."/>
            <person name="Hasebe M."/>
            <person name="Soma T."/>
            <person name="Ikezaki M."/>
            <person name="Machida C."/>
            <person name="Machida Y."/>
        </authorList>
    </citation>
    <scope>GENE FAMILY</scope>
    <scope>NOMENCLATURE</scope>
</reference>
<organism>
    <name type="scientific">Arabidopsis thaliana</name>
    <name type="common">Mouse-ear cress</name>
    <dbReference type="NCBI Taxonomy" id="3702"/>
    <lineage>
        <taxon>Eukaryota</taxon>
        <taxon>Viridiplantae</taxon>
        <taxon>Streptophyta</taxon>
        <taxon>Embryophyta</taxon>
        <taxon>Tracheophyta</taxon>
        <taxon>Spermatophyta</taxon>
        <taxon>Magnoliopsida</taxon>
        <taxon>eudicotyledons</taxon>
        <taxon>Gunneridae</taxon>
        <taxon>Pentapetalae</taxon>
        <taxon>rosids</taxon>
        <taxon>malvids</taxon>
        <taxon>Brassicales</taxon>
        <taxon>Brassicaceae</taxon>
        <taxon>Camelineae</taxon>
        <taxon>Arabidopsis</taxon>
    </lineage>
</organism>
<keyword id="KW-1185">Reference proteome</keyword>
<protein>
    <recommendedName>
        <fullName>LOB domain-containing protein 11</fullName>
    </recommendedName>
    <alternativeName>
        <fullName>ASYMMETRIC LEAVES 2-like protein 7</fullName>
        <shortName>AS2-like protein 7</shortName>
    </alternativeName>
</protein>
<gene>
    <name type="primary">LBD11</name>
    <name type="synonym">ASL7</name>
    <name type="ordered locus">At2g28500</name>
    <name type="ORF">T17D12.6</name>
</gene>
<comment type="tissue specificity">
    <text evidence="3">Expressed in young shoots, stems, leaves and flowers.</text>
</comment>
<comment type="similarity">
    <text evidence="4">Belongs to the LOB domain-containing protein family.</text>
</comment>
<comment type="sequence caution" evidence="4">
    <conflict type="erroneous initiation">
        <sequence resource="EMBL-CDS" id="AAD21485"/>
    </conflict>
    <text>Truncated N-terminus.</text>
</comment>
<comment type="sequence caution" evidence="4">
    <conflict type="erroneous initiation">
        <sequence resource="EMBL-CDS" id="BAH10551"/>
    </conflict>
    <text>Truncated N-terminus.</text>
</comment>
<evidence type="ECO:0000255" key="1">
    <source>
        <dbReference type="PROSITE-ProRule" id="PRU00291"/>
    </source>
</evidence>
<evidence type="ECO:0000256" key="2">
    <source>
        <dbReference type="SAM" id="MobiDB-lite"/>
    </source>
</evidence>
<evidence type="ECO:0000269" key="3">
    <source>
    </source>
</evidence>
<evidence type="ECO:0000305" key="4"/>